<dbReference type="EMBL" id="AF210629">
    <property type="protein sequence ID" value="AAG41252.1"/>
    <property type="molecule type" value="Genomic_DNA"/>
</dbReference>
<dbReference type="EMBL" id="AE016817">
    <property type="protein sequence ID" value="AAS51668.1"/>
    <property type="molecule type" value="Genomic_DNA"/>
</dbReference>
<dbReference type="RefSeq" id="NP_983844.1">
    <property type="nucleotide sequence ID" value="NM_209197.1"/>
</dbReference>
<dbReference type="SMR" id="Q9HF51"/>
<dbReference type="FunCoup" id="Q9HF51">
    <property type="interactions" value="155"/>
</dbReference>
<dbReference type="STRING" id="284811.Q9HF51"/>
<dbReference type="EnsemblFungi" id="AAS51668">
    <property type="protein sequence ID" value="AAS51668"/>
    <property type="gene ID" value="AGOS_ADL252W"/>
</dbReference>
<dbReference type="GeneID" id="4619979"/>
<dbReference type="KEGG" id="ago:AGOS_ADL252W"/>
<dbReference type="eggNOG" id="KOG0393">
    <property type="taxonomic scope" value="Eukaryota"/>
</dbReference>
<dbReference type="HOGENOM" id="CLU_041217_21_2_1"/>
<dbReference type="InParanoid" id="Q9HF51"/>
<dbReference type="OMA" id="THTIMLC"/>
<dbReference type="OrthoDB" id="8830751at2759"/>
<dbReference type="Proteomes" id="UP000000591">
    <property type="component" value="Chromosome IV"/>
</dbReference>
<dbReference type="GO" id="GO:0032153">
    <property type="term" value="C:cell division site"/>
    <property type="evidence" value="ECO:0007669"/>
    <property type="project" value="EnsemblFungi"/>
</dbReference>
<dbReference type="GO" id="GO:0005933">
    <property type="term" value="C:cellular bud"/>
    <property type="evidence" value="ECO:0007669"/>
    <property type="project" value="EnsemblFungi"/>
</dbReference>
<dbReference type="GO" id="GO:0005829">
    <property type="term" value="C:cytosol"/>
    <property type="evidence" value="ECO:0000318"/>
    <property type="project" value="GO_Central"/>
</dbReference>
<dbReference type="GO" id="GO:0005886">
    <property type="term" value="C:plasma membrane"/>
    <property type="evidence" value="ECO:0000318"/>
    <property type="project" value="GO_Central"/>
</dbReference>
<dbReference type="GO" id="GO:0005525">
    <property type="term" value="F:GTP binding"/>
    <property type="evidence" value="ECO:0000318"/>
    <property type="project" value="GO_Central"/>
</dbReference>
<dbReference type="GO" id="GO:0003924">
    <property type="term" value="F:GTPase activity"/>
    <property type="evidence" value="ECO:0000318"/>
    <property type="project" value="GO_Central"/>
</dbReference>
<dbReference type="GO" id="GO:0019901">
    <property type="term" value="F:protein kinase binding"/>
    <property type="evidence" value="ECO:0000318"/>
    <property type="project" value="GO_Central"/>
</dbReference>
<dbReference type="GO" id="GO:0007015">
    <property type="term" value="P:actin filament organization"/>
    <property type="evidence" value="ECO:0000318"/>
    <property type="project" value="GO_Central"/>
</dbReference>
<dbReference type="GO" id="GO:0030950">
    <property type="term" value="P:establishment or maintenance of actin cytoskeleton polarity"/>
    <property type="evidence" value="ECO:0007669"/>
    <property type="project" value="EnsemblFungi"/>
</dbReference>
<dbReference type="GO" id="GO:0000226">
    <property type="term" value="P:microtubule cytoskeleton organization"/>
    <property type="evidence" value="ECO:0007669"/>
    <property type="project" value="EnsemblFungi"/>
</dbReference>
<dbReference type="GO" id="GO:0045921">
    <property type="term" value="P:positive regulation of exocytosis"/>
    <property type="evidence" value="ECO:0007669"/>
    <property type="project" value="EnsemblFungi"/>
</dbReference>
<dbReference type="GO" id="GO:0090338">
    <property type="term" value="P:positive regulation of formin-nucleated actin cable assembly"/>
    <property type="evidence" value="ECO:0007669"/>
    <property type="project" value="EnsemblFungi"/>
</dbReference>
<dbReference type="GO" id="GO:0032956">
    <property type="term" value="P:regulation of actin cytoskeleton organization"/>
    <property type="evidence" value="ECO:0000318"/>
    <property type="project" value="GO_Central"/>
</dbReference>
<dbReference type="GO" id="GO:0010590">
    <property type="term" value="P:regulation of septum digestion after cytokinesis"/>
    <property type="evidence" value="ECO:0007669"/>
    <property type="project" value="EnsemblFungi"/>
</dbReference>
<dbReference type="GO" id="GO:0007165">
    <property type="term" value="P:signal transduction"/>
    <property type="evidence" value="ECO:0000318"/>
    <property type="project" value="GO_Central"/>
</dbReference>
<dbReference type="GO" id="GO:0007264">
    <property type="term" value="P:small GTPase-mediated signal transduction"/>
    <property type="evidence" value="ECO:0007669"/>
    <property type="project" value="InterPro"/>
</dbReference>
<dbReference type="FunFam" id="3.40.50.300:FF:000780">
    <property type="entry name" value="Rho GTPase Rho3"/>
    <property type="match status" value="1"/>
</dbReference>
<dbReference type="Gene3D" id="3.40.50.300">
    <property type="entry name" value="P-loop containing nucleotide triphosphate hydrolases"/>
    <property type="match status" value="1"/>
</dbReference>
<dbReference type="InterPro" id="IPR027417">
    <property type="entry name" value="P-loop_NTPase"/>
</dbReference>
<dbReference type="InterPro" id="IPR005225">
    <property type="entry name" value="Small_GTP-bd"/>
</dbReference>
<dbReference type="InterPro" id="IPR001806">
    <property type="entry name" value="Small_GTPase"/>
</dbReference>
<dbReference type="InterPro" id="IPR003578">
    <property type="entry name" value="Small_GTPase_Rho"/>
</dbReference>
<dbReference type="NCBIfam" id="TIGR00231">
    <property type="entry name" value="small_GTP"/>
    <property type="match status" value="1"/>
</dbReference>
<dbReference type="PANTHER" id="PTHR24072">
    <property type="entry name" value="RHO FAMILY GTPASE"/>
    <property type="match status" value="1"/>
</dbReference>
<dbReference type="Pfam" id="PF00071">
    <property type="entry name" value="Ras"/>
    <property type="match status" value="1"/>
</dbReference>
<dbReference type="PRINTS" id="PR00449">
    <property type="entry name" value="RASTRNSFRMNG"/>
</dbReference>
<dbReference type="SMART" id="SM00175">
    <property type="entry name" value="RAB"/>
    <property type="match status" value="1"/>
</dbReference>
<dbReference type="SMART" id="SM00176">
    <property type="entry name" value="RAN"/>
    <property type="match status" value="1"/>
</dbReference>
<dbReference type="SMART" id="SM00173">
    <property type="entry name" value="RAS"/>
    <property type="match status" value="1"/>
</dbReference>
<dbReference type="SMART" id="SM00174">
    <property type="entry name" value="RHO"/>
    <property type="match status" value="1"/>
</dbReference>
<dbReference type="SUPFAM" id="SSF52540">
    <property type="entry name" value="P-loop containing nucleoside triphosphate hydrolases"/>
    <property type="match status" value="1"/>
</dbReference>
<dbReference type="PROSITE" id="PS51420">
    <property type="entry name" value="RHO"/>
    <property type="match status" value="1"/>
</dbReference>
<sequence>MPLCGSSSSSKHPIERKIVILGDGACGKTSLLNVFTRGYFPKVYEPTVFENYIHDIFVDNQHITLSLWDTAGQEEFDRLRSLSYSDTHTIMLCFSVDSRDSLENVKNKWVSEIADHCEGVKLVLVALKCDLRSSDEYGNESAITPGSIQNQKYNGGGGNGLIPYDEGLAMAKQIGALRYLECSAKMNRGVNEAFTEAARCALTATPKGARDSAPEAESSSCTIM</sequence>
<feature type="chain" id="PRO_0000198933" description="GTP-binding protein RHO3">
    <location>
        <begin position="1"/>
        <end position="221"/>
    </location>
</feature>
<feature type="propeptide" id="PRO_0000281263" description="Removed in mature form" evidence="3">
    <location>
        <begin position="222"/>
        <end position="224"/>
    </location>
</feature>
<feature type="region of interest" description="Disordered" evidence="4">
    <location>
        <begin position="205"/>
        <end position="224"/>
    </location>
</feature>
<feature type="short sequence motif" description="Effector region">
    <location>
        <begin position="44"/>
        <end position="52"/>
    </location>
</feature>
<feature type="binding site" evidence="2">
    <location>
        <begin position="22"/>
        <end position="29"/>
    </location>
    <ligand>
        <name>GTP</name>
        <dbReference type="ChEBI" id="CHEBI:37565"/>
    </ligand>
</feature>
<feature type="binding site" evidence="1">
    <location>
        <begin position="69"/>
        <end position="73"/>
    </location>
    <ligand>
        <name>GTP</name>
        <dbReference type="ChEBI" id="CHEBI:37565"/>
    </ligand>
</feature>
<feature type="binding site" evidence="2">
    <location>
        <begin position="127"/>
        <end position="130"/>
    </location>
    <ligand>
        <name>GTP</name>
        <dbReference type="ChEBI" id="CHEBI:37565"/>
    </ligand>
</feature>
<feature type="modified residue" description="Cysteine methyl ester" evidence="3">
    <location>
        <position position="221"/>
    </location>
</feature>
<feature type="lipid moiety-binding region" description="S-geranylgeranyl cysteine" evidence="3">
    <location>
        <position position="221"/>
    </location>
</feature>
<keyword id="KW-1003">Cell membrane</keyword>
<keyword id="KW-0342">GTP-binding</keyword>
<keyword id="KW-0449">Lipoprotein</keyword>
<keyword id="KW-0472">Membrane</keyword>
<keyword id="KW-0488">Methylation</keyword>
<keyword id="KW-0547">Nucleotide-binding</keyword>
<keyword id="KW-0636">Prenylation</keyword>
<keyword id="KW-1185">Reference proteome</keyword>
<reference key="1">
    <citation type="journal article" date="2001" name="Genetics">
        <title>Cell polarity and hyphal morphogenesis are controlled by multiple rho-protein modules in the filamentous ascomycete Ashbya gossypii.</title>
        <authorList>
            <person name="Wendland J."/>
            <person name="Philippsen P."/>
        </authorList>
    </citation>
    <scope>NUCLEOTIDE SEQUENCE [GENOMIC DNA]</scope>
    <scope>FUNCTION</scope>
</reference>
<reference key="2">
    <citation type="journal article" date="2004" name="Science">
        <title>The Ashbya gossypii genome as a tool for mapping the ancient Saccharomyces cerevisiae genome.</title>
        <authorList>
            <person name="Dietrich F.S."/>
            <person name="Voegeli S."/>
            <person name="Brachat S."/>
            <person name="Lerch A."/>
            <person name="Gates K."/>
            <person name="Steiner S."/>
            <person name="Mohr C."/>
            <person name="Poehlmann R."/>
            <person name="Luedi P."/>
            <person name="Choi S."/>
            <person name="Wing R.A."/>
            <person name="Flavier A."/>
            <person name="Gaffney T.D."/>
            <person name="Philippsen P."/>
        </authorList>
    </citation>
    <scope>NUCLEOTIDE SEQUENCE [LARGE SCALE GENOMIC DNA]</scope>
    <source>
        <strain>ATCC 10895 / CBS 109.51 / FGSC 9923 / NRRL Y-1056</strain>
    </source>
</reference>
<reference key="3">
    <citation type="journal article" date="2013" name="G3 (Bethesda)">
        <title>Genomes of Ashbya fungi isolated from insects reveal four mating-type loci, numerous translocations, lack of transposons, and distinct gene duplications.</title>
        <authorList>
            <person name="Dietrich F.S."/>
            <person name="Voegeli S."/>
            <person name="Kuo S."/>
            <person name="Philippsen P."/>
        </authorList>
    </citation>
    <scope>GENOME REANNOTATION</scope>
    <source>
        <strain>ATCC 10895 / CBS 109.51 / FGSC 9923 / NRRL Y-1056</strain>
    </source>
</reference>
<name>RHO3_EREGS</name>
<accession>Q9HF51</accession>
<gene>
    <name type="primary">RHO3</name>
    <name type="ordered locus">ADL252W</name>
</gene>
<proteinExistence type="inferred from homology"/>
<evidence type="ECO:0000250" key="1">
    <source>
        <dbReference type="UniProtKB" id="P20171"/>
    </source>
</evidence>
<evidence type="ECO:0000250" key="2">
    <source>
        <dbReference type="UniProtKB" id="P61586"/>
    </source>
</evidence>
<evidence type="ECO:0000250" key="3">
    <source>
        <dbReference type="UniProtKB" id="P62745"/>
    </source>
</evidence>
<evidence type="ECO:0000256" key="4">
    <source>
        <dbReference type="SAM" id="MobiDB-lite"/>
    </source>
</evidence>
<evidence type="ECO:0000269" key="5">
    <source>
    </source>
</evidence>
<evidence type="ECO:0000305" key="6"/>
<organism>
    <name type="scientific">Eremothecium gossypii (strain ATCC 10895 / CBS 109.51 / FGSC 9923 / NRRL Y-1056)</name>
    <name type="common">Yeast</name>
    <name type="synonym">Ashbya gossypii</name>
    <dbReference type="NCBI Taxonomy" id="284811"/>
    <lineage>
        <taxon>Eukaryota</taxon>
        <taxon>Fungi</taxon>
        <taxon>Dikarya</taxon>
        <taxon>Ascomycota</taxon>
        <taxon>Saccharomycotina</taxon>
        <taxon>Saccharomycetes</taxon>
        <taxon>Saccharomycetales</taxon>
        <taxon>Saccharomycetaceae</taxon>
        <taxon>Eremothecium</taxon>
    </lineage>
</organism>
<comment type="function">
    <text evidence="5">Involved in the regulation of actin polarization. Rho proteins are required for distinct steps during polarized hyphal growth of A.gossypii.</text>
</comment>
<comment type="subcellular location">
    <subcellularLocation>
        <location evidence="6">Cell membrane</location>
        <topology evidence="6">Lipid-anchor</topology>
        <orientation evidence="6">Cytoplasmic side</orientation>
    </subcellularLocation>
</comment>
<comment type="similarity">
    <text evidence="6">Belongs to the small GTPase superfamily. Rho family.</text>
</comment>
<protein>
    <recommendedName>
        <fullName>GTP-binding protein RHO3</fullName>
    </recommendedName>
</protein>